<organism>
    <name type="scientific">Burkholderia lata (strain ATCC 17760 / DSM 23089 / LMG 22485 / NCIMB 9086 / R18194 / 383)</name>
    <dbReference type="NCBI Taxonomy" id="482957"/>
    <lineage>
        <taxon>Bacteria</taxon>
        <taxon>Pseudomonadati</taxon>
        <taxon>Pseudomonadota</taxon>
        <taxon>Betaproteobacteria</taxon>
        <taxon>Burkholderiales</taxon>
        <taxon>Burkholderiaceae</taxon>
        <taxon>Burkholderia</taxon>
        <taxon>Burkholderia cepacia complex</taxon>
    </lineage>
</organism>
<comment type="function">
    <text evidence="1">Part of the ABC transporter complex SsuABC involved in aliphatic sulfonates import. Responsible for energy coupling to the transport system.</text>
</comment>
<comment type="catalytic activity">
    <reaction evidence="1">
        <text>ATP + H2O + aliphatic sulfonate-[sulfonate-binding protein]Side 1 = ADP + phosphate + aliphatic sulfonateSide 2 + [sulfonate-binding protein]Side 1.</text>
        <dbReference type="EC" id="7.6.2.14"/>
    </reaction>
</comment>
<comment type="subunit">
    <text evidence="1">The complex is composed of two ATP-binding proteins (SsuB), two transmembrane proteins (SsuC) and a solute-binding protein (SsuA).</text>
</comment>
<comment type="subcellular location">
    <subcellularLocation>
        <location evidence="1">Cell inner membrane</location>
        <topology evidence="1">Peripheral membrane protein</topology>
    </subcellularLocation>
</comment>
<comment type="similarity">
    <text evidence="1">Belongs to the ABC transporter superfamily. Aliphatic sulfonates importer (TC 3.A.1.17.2) family.</text>
</comment>
<reference key="1">
    <citation type="submission" date="2005-10" db="EMBL/GenBank/DDBJ databases">
        <title>Complete sequence of chromosome 1 of Burkholderia sp. 383.</title>
        <authorList>
            <consortium name="US DOE Joint Genome Institute"/>
            <person name="Copeland A."/>
            <person name="Lucas S."/>
            <person name="Lapidus A."/>
            <person name="Barry K."/>
            <person name="Detter J.C."/>
            <person name="Glavina T."/>
            <person name="Hammon N."/>
            <person name="Israni S."/>
            <person name="Pitluck S."/>
            <person name="Chain P."/>
            <person name="Malfatti S."/>
            <person name="Shin M."/>
            <person name="Vergez L."/>
            <person name="Schmutz J."/>
            <person name="Larimer F."/>
            <person name="Land M."/>
            <person name="Kyrpides N."/>
            <person name="Lykidis A."/>
            <person name="Richardson P."/>
        </authorList>
    </citation>
    <scope>NUCLEOTIDE SEQUENCE [LARGE SCALE GENOMIC DNA]</scope>
    <source>
        <strain>ATCC 17760 / DSM 23089 / LMG 22485 / NCIMB 9086 / R18194 / 383</strain>
    </source>
</reference>
<gene>
    <name evidence="1" type="primary">ssuB1</name>
    <name type="ordered locus">Bcep18194_A4706</name>
</gene>
<dbReference type="EC" id="7.6.2.14" evidence="1"/>
<dbReference type="EMBL" id="CP000151">
    <property type="protein sequence ID" value="ABB08301.1"/>
    <property type="molecule type" value="Genomic_DNA"/>
</dbReference>
<dbReference type="RefSeq" id="WP_011351861.1">
    <property type="nucleotide sequence ID" value="NC_007510.1"/>
</dbReference>
<dbReference type="SMR" id="Q39GW5"/>
<dbReference type="GeneID" id="45094606"/>
<dbReference type="KEGG" id="bur:Bcep18194_A4706"/>
<dbReference type="PATRIC" id="fig|482957.22.peg.1620"/>
<dbReference type="HOGENOM" id="CLU_000604_1_22_4"/>
<dbReference type="Proteomes" id="UP000002705">
    <property type="component" value="Chromosome 1"/>
</dbReference>
<dbReference type="GO" id="GO:0005886">
    <property type="term" value="C:plasma membrane"/>
    <property type="evidence" value="ECO:0007669"/>
    <property type="project" value="UniProtKB-SubCell"/>
</dbReference>
<dbReference type="GO" id="GO:0005524">
    <property type="term" value="F:ATP binding"/>
    <property type="evidence" value="ECO:0007669"/>
    <property type="project" value="UniProtKB-KW"/>
</dbReference>
<dbReference type="GO" id="GO:0016887">
    <property type="term" value="F:ATP hydrolysis activity"/>
    <property type="evidence" value="ECO:0007669"/>
    <property type="project" value="InterPro"/>
</dbReference>
<dbReference type="CDD" id="cd03293">
    <property type="entry name" value="ABC_NrtD_SsuB_transporters"/>
    <property type="match status" value="1"/>
</dbReference>
<dbReference type="Gene3D" id="3.40.50.300">
    <property type="entry name" value="P-loop containing nucleotide triphosphate hydrolases"/>
    <property type="match status" value="1"/>
</dbReference>
<dbReference type="InterPro" id="IPR003593">
    <property type="entry name" value="AAA+_ATPase"/>
</dbReference>
<dbReference type="InterPro" id="IPR003439">
    <property type="entry name" value="ABC_transporter-like_ATP-bd"/>
</dbReference>
<dbReference type="InterPro" id="IPR017871">
    <property type="entry name" value="ABC_transporter-like_CS"/>
</dbReference>
<dbReference type="InterPro" id="IPR050166">
    <property type="entry name" value="ABC_transporter_ATP-bind"/>
</dbReference>
<dbReference type="InterPro" id="IPR027417">
    <property type="entry name" value="P-loop_NTPase"/>
</dbReference>
<dbReference type="PANTHER" id="PTHR42788:SF17">
    <property type="entry name" value="ALIPHATIC SULFONATES IMPORT ATP-BINDING PROTEIN SSUB"/>
    <property type="match status" value="1"/>
</dbReference>
<dbReference type="PANTHER" id="PTHR42788">
    <property type="entry name" value="TAURINE IMPORT ATP-BINDING PROTEIN-RELATED"/>
    <property type="match status" value="1"/>
</dbReference>
<dbReference type="Pfam" id="PF00005">
    <property type="entry name" value="ABC_tran"/>
    <property type="match status" value="1"/>
</dbReference>
<dbReference type="SMART" id="SM00382">
    <property type="entry name" value="AAA"/>
    <property type="match status" value="1"/>
</dbReference>
<dbReference type="SUPFAM" id="SSF52540">
    <property type="entry name" value="P-loop containing nucleoside triphosphate hydrolases"/>
    <property type="match status" value="1"/>
</dbReference>
<dbReference type="PROSITE" id="PS00211">
    <property type="entry name" value="ABC_TRANSPORTER_1"/>
    <property type="match status" value="1"/>
</dbReference>
<dbReference type="PROSITE" id="PS50893">
    <property type="entry name" value="ABC_TRANSPORTER_2"/>
    <property type="match status" value="1"/>
</dbReference>
<dbReference type="PROSITE" id="PS51291">
    <property type="entry name" value="SSUB"/>
    <property type="match status" value="1"/>
</dbReference>
<accession>Q39GW5</accession>
<evidence type="ECO:0000255" key="1">
    <source>
        <dbReference type="HAMAP-Rule" id="MF_01724"/>
    </source>
</evidence>
<protein>
    <recommendedName>
        <fullName evidence="1">Aliphatic sulfonates import ATP-binding protein SsuB 1</fullName>
        <ecNumber evidence="1">7.6.2.14</ecNumber>
    </recommendedName>
</protein>
<sequence>MNATTSAAAYGLLAGADLEAELAQARVADGDARDAAVLERDGSASVVPLARRRPGSPVSDDAVTLSGVSKRFGARTVLDNVELGIARGSFVAIVGRSGCGKSTLLRLVAGLEQPSSGALETRGEGGGELDTRIMYQDARLLPWKTVLQNVMLGLGRGARDQARAVLDEVGLLERANDWPAQLSGGQRQRVALARALVHRPQLLLLDEPLGALDALTRIEMHALIERLWREHRFTALLVTHDVQEAVALGDRILLIEQGRVALDQPVPLDRPRARASAAFAALEDRVLKRVLAGGPGVSDHGAPHEADNVRPVGQIRWAV</sequence>
<feature type="chain" id="PRO_0000279903" description="Aliphatic sulfonates import ATP-binding protein SsuB 1">
    <location>
        <begin position="1"/>
        <end position="319"/>
    </location>
</feature>
<feature type="domain" description="ABC transporter" evidence="1">
    <location>
        <begin position="63"/>
        <end position="282"/>
    </location>
</feature>
<feature type="binding site" evidence="1">
    <location>
        <begin position="95"/>
        <end position="102"/>
    </location>
    <ligand>
        <name>ATP</name>
        <dbReference type="ChEBI" id="CHEBI:30616"/>
    </ligand>
</feature>
<name>SSUB1_BURL3</name>
<proteinExistence type="inferred from homology"/>
<keyword id="KW-0067">ATP-binding</keyword>
<keyword id="KW-0997">Cell inner membrane</keyword>
<keyword id="KW-1003">Cell membrane</keyword>
<keyword id="KW-0472">Membrane</keyword>
<keyword id="KW-0547">Nucleotide-binding</keyword>
<keyword id="KW-1278">Translocase</keyword>
<keyword id="KW-0813">Transport</keyword>